<dbReference type="EC" id="6.1.1.19" evidence="1"/>
<dbReference type="EMBL" id="CP000800">
    <property type="protein sequence ID" value="ABV20169.1"/>
    <property type="molecule type" value="Genomic_DNA"/>
</dbReference>
<dbReference type="RefSeq" id="WP_001025302.1">
    <property type="nucleotide sequence ID" value="NC_009801.1"/>
</dbReference>
<dbReference type="SMR" id="A7ZN02"/>
<dbReference type="KEGG" id="ecw:EcE24377A_2108"/>
<dbReference type="HOGENOM" id="CLU_006406_5_1_6"/>
<dbReference type="Proteomes" id="UP000001122">
    <property type="component" value="Chromosome"/>
</dbReference>
<dbReference type="GO" id="GO:0005737">
    <property type="term" value="C:cytoplasm"/>
    <property type="evidence" value="ECO:0007669"/>
    <property type="project" value="UniProtKB-SubCell"/>
</dbReference>
<dbReference type="GO" id="GO:0004814">
    <property type="term" value="F:arginine-tRNA ligase activity"/>
    <property type="evidence" value="ECO:0007669"/>
    <property type="project" value="UniProtKB-UniRule"/>
</dbReference>
<dbReference type="GO" id="GO:0005524">
    <property type="term" value="F:ATP binding"/>
    <property type="evidence" value="ECO:0007669"/>
    <property type="project" value="UniProtKB-UniRule"/>
</dbReference>
<dbReference type="GO" id="GO:0006420">
    <property type="term" value="P:arginyl-tRNA aminoacylation"/>
    <property type="evidence" value="ECO:0007669"/>
    <property type="project" value="UniProtKB-UniRule"/>
</dbReference>
<dbReference type="CDD" id="cd07956">
    <property type="entry name" value="Anticodon_Ia_Arg"/>
    <property type="match status" value="1"/>
</dbReference>
<dbReference type="CDD" id="cd00671">
    <property type="entry name" value="ArgRS_core"/>
    <property type="match status" value="1"/>
</dbReference>
<dbReference type="FunFam" id="1.10.730.10:FF:000001">
    <property type="entry name" value="Arginine--tRNA ligase"/>
    <property type="match status" value="1"/>
</dbReference>
<dbReference type="FunFam" id="3.30.1360.70:FF:000001">
    <property type="entry name" value="Arginine--tRNA ligase"/>
    <property type="match status" value="1"/>
</dbReference>
<dbReference type="FunFam" id="3.40.50.620:FF:000030">
    <property type="entry name" value="Arginine--tRNA ligase"/>
    <property type="match status" value="1"/>
</dbReference>
<dbReference type="Gene3D" id="3.30.1360.70">
    <property type="entry name" value="Arginyl tRNA synthetase N-terminal domain"/>
    <property type="match status" value="1"/>
</dbReference>
<dbReference type="Gene3D" id="3.40.50.620">
    <property type="entry name" value="HUPs"/>
    <property type="match status" value="1"/>
</dbReference>
<dbReference type="Gene3D" id="1.10.730.10">
    <property type="entry name" value="Isoleucyl-tRNA Synthetase, Domain 1"/>
    <property type="match status" value="1"/>
</dbReference>
<dbReference type="HAMAP" id="MF_00123">
    <property type="entry name" value="Arg_tRNA_synth"/>
    <property type="match status" value="1"/>
</dbReference>
<dbReference type="InterPro" id="IPR001412">
    <property type="entry name" value="aa-tRNA-synth_I_CS"/>
</dbReference>
<dbReference type="InterPro" id="IPR001278">
    <property type="entry name" value="Arg-tRNA-ligase"/>
</dbReference>
<dbReference type="InterPro" id="IPR005148">
    <property type="entry name" value="Arg-tRNA-synth_N"/>
</dbReference>
<dbReference type="InterPro" id="IPR036695">
    <property type="entry name" value="Arg-tRNA-synth_N_sf"/>
</dbReference>
<dbReference type="InterPro" id="IPR035684">
    <property type="entry name" value="ArgRS_core"/>
</dbReference>
<dbReference type="InterPro" id="IPR008909">
    <property type="entry name" value="DALR_anticod-bd"/>
</dbReference>
<dbReference type="InterPro" id="IPR014729">
    <property type="entry name" value="Rossmann-like_a/b/a_fold"/>
</dbReference>
<dbReference type="InterPro" id="IPR009080">
    <property type="entry name" value="tRNAsynth_Ia_anticodon-bd"/>
</dbReference>
<dbReference type="NCBIfam" id="TIGR00456">
    <property type="entry name" value="argS"/>
    <property type="match status" value="1"/>
</dbReference>
<dbReference type="PANTHER" id="PTHR11956:SF5">
    <property type="entry name" value="ARGININE--TRNA LIGASE, CYTOPLASMIC"/>
    <property type="match status" value="1"/>
</dbReference>
<dbReference type="PANTHER" id="PTHR11956">
    <property type="entry name" value="ARGINYL-TRNA SYNTHETASE"/>
    <property type="match status" value="1"/>
</dbReference>
<dbReference type="Pfam" id="PF03485">
    <property type="entry name" value="Arg_tRNA_synt_N"/>
    <property type="match status" value="1"/>
</dbReference>
<dbReference type="Pfam" id="PF05746">
    <property type="entry name" value="DALR_1"/>
    <property type="match status" value="1"/>
</dbReference>
<dbReference type="Pfam" id="PF00750">
    <property type="entry name" value="tRNA-synt_1d"/>
    <property type="match status" value="1"/>
</dbReference>
<dbReference type="PRINTS" id="PR01038">
    <property type="entry name" value="TRNASYNTHARG"/>
</dbReference>
<dbReference type="SMART" id="SM01016">
    <property type="entry name" value="Arg_tRNA_synt_N"/>
    <property type="match status" value="1"/>
</dbReference>
<dbReference type="SMART" id="SM00836">
    <property type="entry name" value="DALR_1"/>
    <property type="match status" value="1"/>
</dbReference>
<dbReference type="SUPFAM" id="SSF47323">
    <property type="entry name" value="Anticodon-binding domain of a subclass of class I aminoacyl-tRNA synthetases"/>
    <property type="match status" value="1"/>
</dbReference>
<dbReference type="SUPFAM" id="SSF55190">
    <property type="entry name" value="Arginyl-tRNA synthetase (ArgRS), N-terminal 'additional' domain"/>
    <property type="match status" value="1"/>
</dbReference>
<dbReference type="SUPFAM" id="SSF52374">
    <property type="entry name" value="Nucleotidylyl transferase"/>
    <property type="match status" value="1"/>
</dbReference>
<dbReference type="PROSITE" id="PS00178">
    <property type="entry name" value="AA_TRNA_LIGASE_I"/>
    <property type="match status" value="1"/>
</dbReference>
<evidence type="ECO:0000255" key="1">
    <source>
        <dbReference type="HAMAP-Rule" id="MF_00123"/>
    </source>
</evidence>
<feature type="chain" id="PRO_1000057808" description="Arginine--tRNA ligase">
    <location>
        <begin position="1"/>
        <end position="577"/>
    </location>
</feature>
<feature type="short sequence motif" description="'HIGH' region">
    <location>
        <begin position="122"/>
        <end position="132"/>
    </location>
</feature>
<protein>
    <recommendedName>
        <fullName evidence="1">Arginine--tRNA ligase</fullName>
        <ecNumber evidence="1">6.1.1.19</ecNumber>
    </recommendedName>
    <alternativeName>
        <fullName evidence="1">Arginyl-tRNA synthetase</fullName>
        <shortName evidence="1">ArgRS</shortName>
    </alternativeName>
</protein>
<organism>
    <name type="scientific">Escherichia coli O139:H28 (strain E24377A / ETEC)</name>
    <dbReference type="NCBI Taxonomy" id="331111"/>
    <lineage>
        <taxon>Bacteria</taxon>
        <taxon>Pseudomonadati</taxon>
        <taxon>Pseudomonadota</taxon>
        <taxon>Gammaproteobacteria</taxon>
        <taxon>Enterobacterales</taxon>
        <taxon>Enterobacteriaceae</taxon>
        <taxon>Escherichia</taxon>
    </lineage>
</organism>
<keyword id="KW-0030">Aminoacyl-tRNA synthetase</keyword>
<keyword id="KW-0067">ATP-binding</keyword>
<keyword id="KW-0963">Cytoplasm</keyword>
<keyword id="KW-0436">Ligase</keyword>
<keyword id="KW-0547">Nucleotide-binding</keyword>
<keyword id="KW-0648">Protein biosynthesis</keyword>
<keyword id="KW-1185">Reference proteome</keyword>
<gene>
    <name evidence="1" type="primary">argS</name>
    <name type="ordered locus">EcE24377A_2108</name>
</gene>
<reference key="1">
    <citation type="journal article" date="2008" name="J. Bacteriol.">
        <title>The pangenome structure of Escherichia coli: comparative genomic analysis of E. coli commensal and pathogenic isolates.</title>
        <authorList>
            <person name="Rasko D.A."/>
            <person name="Rosovitz M.J."/>
            <person name="Myers G.S.A."/>
            <person name="Mongodin E.F."/>
            <person name="Fricke W.F."/>
            <person name="Gajer P."/>
            <person name="Crabtree J."/>
            <person name="Sebaihia M."/>
            <person name="Thomson N.R."/>
            <person name="Chaudhuri R."/>
            <person name="Henderson I.R."/>
            <person name="Sperandio V."/>
            <person name="Ravel J."/>
        </authorList>
    </citation>
    <scope>NUCLEOTIDE SEQUENCE [LARGE SCALE GENOMIC DNA]</scope>
    <source>
        <strain>E24377A / ETEC</strain>
    </source>
</reference>
<proteinExistence type="inferred from homology"/>
<name>SYR_ECO24</name>
<accession>A7ZN02</accession>
<sequence>MNIQALLSEKVRQAMIAAGAPADCEPQVRQSAKVQFGDYQANGMMAVAKKLGMAPRQLAEQVLTHLDLNGIASKVEIAGPGFINIFLDPAFLADHVQQALASDRLDVATPEKQTIVVDYSAPNVAKEMHVGHLRSTIIGDAAVRTLEFLGHKVIRANHVGDWGTQFGMLIAWLEKQQQENAGEMELADLEGFYRDAKKHYDEDEEFAERARNYVVKLQSGDEYFREMWRKLVDITMTQNQITYDRLNVTLTRDDVMGESLYNPMLLGIVADLKAKGLAVESEGATVVFLDEFKNKEGEPMGVIIQKKDGGYLYTTTDIACAKYRYETLHADRVLYYIDSRQHQHLMQAWAIVRKAGYVPESVPLEHHMFGMMLGKDGKPFKTRAGGTVKLADLLDEALERARRLVAEKNPDMPADELEKLANAVGIGAVKYADLSKNRTTDYIFDWDNMLAFEGNTAPYMQYAYTRVLSVFRKAEINEEQLAAAPVIIREDREAQLAARLLQFEETLTVVAREGTPHVMCAYLYDLAGLFSGFYEHCPILSAENEEVRNSRLKLAQLTAKTLKLGLDTLGIETVERM</sequence>
<comment type="catalytic activity">
    <reaction evidence="1">
        <text>tRNA(Arg) + L-arginine + ATP = L-arginyl-tRNA(Arg) + AMP + diphosphate</text>
        <dbReference type="Rhea" id="RHEA:20301"/>
        <dbReference type="Rhea" id="RHEA-COMP:9658"/>
        <dbReference type="Rhea" id="RHEA-COMP:9673"/>
        <dbReference type="ChEBI" id="CHEBI:30616"/>
        <dbReference type="ChEBI" id="CHEBI:32682"/>
        <dbReference type="ChEBI" id="CHEBI:33019"/>
        <dbReference type="ChEBI" id="CHEBI:78442"/>
        <dbReference type="ChEBI" id="CHEBI:78513"/>
        <dbReference type="ChEBI" id="CHEBI:456215"/>
        <dbReference type="EC" id="6.1.1.19"/>
    </reaction>
</comment>
<comment type="subunit">
    <text evidence="1">Monomer.</text>
</comment>
<comment type="subcellular location">
    <subcellularLocation>
        <location evidence="1">Cytoplasm</location>
    </subcellularLocation>
</comment>
<comment type="similarity">
    <text evidence="1">Belongs to the class-I aminoacyl-tRNA synthetase family.</text>
</comment>